<keyword id="KW-0349">Heme</keyword>
<keyword id="KW-0408">Iron</keyword>
<keyword id="KW-0479">Metal-binding</keyword>
<keyword id="KW-0561">Oxygen transport</keyword>
<keyword id="KW-0597">Phosphoprotein</keyword>
<keyword id="KW-0813">Transport</keyword>
<dbReference type="EMBL" id="M61739">
    <property type="protein sequence ID" value="AAA35444.1"/>
    <property type="molecule type" value="Genomic_DNA"/>
</dbReference>
<dbReference type="EMBL" id="U60902">
    <property type="protein sequence ID" value="AAC50962.1"/>
    <property type="molecule type" value="Genomic_DNA"/>
</dbReference>
<dbReference type="PIR" id="A39733">
    <property type="entry name" value="A39733"/>
</dbReference>
<dbReference type="SMR" id="Q03902"/>
<dbReference type="GO" id="GO:0072562">
    <property type="term" value="C:blood microparticle"/>
    <property type="evidence" value="ECO:0007669"/>
    <property type="project" value="TreeGrafter"/>
</dbReference>
<dbReference type="GO" id="GO:0031838">
    <property type="term" value="C:haptoglobin-hemoglobin complex"/>
    <property type="evidence" value="ECO:0007669"/>
    <property type="project" value="TreeGrafter"/>
</dbReference>
<dbReference type="GO" id="GO:0005833">
    <property type="term" value="C:hemoglobin complex"/>
    <property type="evidence" value="ECO:0007669"/>
    <property type="project" value="InterPro"/>
</dbReference>
<dbReference type="GO" id="GO:0031720">
    <property type="term" value="F:haptoglobin binding"/>
    <property type="evidence" value="ECO:0007669"/>
    <property type="project" value="TreeGrafter"/>
</dbReference>
<dbReference type="GO" id="GO:0020037">
    <property type="term" value="F:heme binding"/>
    <property type="evidence" value="ECO:0007669"/>
    <property type="project" value="InterPro"/>
</dbReference>
<dbReference type="GO" id="GO:0031721">
    <property type="term" value="F:hemoglobin alpha binding"/>
    <property type="evidence" value="ECO:0007669"/>
    <property type="project" value="TreeGrafter"/>
</dbReference>
<dbReference type="GO" id="GO:0046872">
    <property type="term" value="F:metal ion binding"/>
    <property type="evidence" value="ECO:0007669"/>
    <property type="project" value="UniProtKB-KW"/>
</dbReference>
<dbReference type="GO" id="GO:0043177">
    <property type="term" value="F:organic acid binding"/>
    <property type="evidence" value="ECO:0007669"/>
    <property type="project" value="TreeGrafter"/>
</dbReference>
<dbReference type="GO" id="GO:0019825">
    <property type="term" value="F:oxygen binding"/>
    <property type="evidence" value="ECO:0007669"/>
    <property type="project" value="InterPro"/>
</dbReference>
<dbReference type="GO" id="GO:0005344">
    <property type="term" value="F:oxygen carrier activity"/>
    <property type="evidence" value="ECO:0007669"/>
    <property type="project" value="UniProtKB-KW"/>
</dbReference>
<dbReference type="GO" id="GO:0004601">
    <property type="term" value="F:peroxidase activity"/>
    <property type="evidence" value="ECO:0007669"/>
    <property type="project" value="TreeGrafter"/>
</dbReference>
<dbReference type="GO" id="GO:0042744">
    <property type="term" value="P:hydrogen peroxide catabolic process"/>
    <property type="evidence" value="ECO:0007669"/>
    <property type="project" value="TreeGrafter"/>
</dbReference>
<dbReference type="CDD" id="cd08925">
    <property type="entry name" value="Hb-beta-like"/>
    <property type="match status" value="1"/>
</dbReference>
<dbReference type="FunFam" id="1.10.490.10:FF:000001">
    <property type="entry name" value="Hemoglobin subunit beta"/>
    <property type="match status" value="1"/>
</dbReference>
<dbReference type="Gene3D" id="1.10.490.10">
    <property type="entry name" value="Globins"/>
    <property type="match status" value="1"/>
</dbReference>
<dbReference type="InterPro" id="IPR000971">
    <property type="entry name" value="Globin"/>
</dbReference>
<dbReference type="InterPro" id="IPR009050">
    <property type="entry name" value="Globin-like_sf"/>
</dbReference>
<dbReference type="InterPro" id="IPR012292">
    <property type="entry name" value="Globin/Proto"/>
</dbReference>
<dbReference type="InterPro" id="IPR002337">
    <property type="entry name" value="Hemoglobin_b"/>
</dbReference>
<dbReference type="InterPro" id="IPR050056">
    <property type="entry name" value="Hemoglobin_oxygen_transport"/>
</dbReference>
<dbReference type="PANTHER" id="PTHR11442">
    <property type="entry name" value="HEMOGLOBIN FAMILY MEMBER"/>
    <property type="match status" value="1"/>
</dbReference>
<dbReference type="PANTHER" id="PTHR11442:SF42">
    <property type="entry name" value="HEMOGLOBIN SUBUNIT BETA"/>
    <property type="match status" value="1"/>
</dbReference>
<dbReference type="Pfam" id="PF00042">
    <property type="entry name" value="Globin"/>
    <property type="match status" value="1"/>
</dbReference>
<dbReference type="PRINTS" id="PR00814">
    <property type="entry name" value="BETAHAEM"/>
</dbReference>
<dbReference type="SUPFAM" id="SSF46458">
    <property type="entry name" value="Globin-like"/>
    <property type="match status" value="1"/>
</dbReference>
<dbReference type="PROSITE" id="PS01033">
    <property type="entry name" value="GLOBIN"/>
    <property type="match status" value="1"/>
</dbReference>
<name>HBD_OTOCR</name>
<reference key="1">
    <citation type="journal article" date="1991" name="J. Biol. Chem.">
        <title>Concerted evolution led to high expression of a prosimian primate delta globin gene locus.</title>
        <authorList>
            <person name="Tagle D.A."/>
            <person name="Slightom J.L."/>
            <person name="Jones R.T."/>
            <person name="Goodman M."/>
        </authorList>
    </citation>
    <scope>NUCLEOTIDE SEQUENCE [GENOMIC DNA]</scope>
</reference>
<reference key="2">
    <citation type="journal article" date="1992" name="Genomics">
        <title>The beta globin gene cluster of the prosimian primate Galago crassicaudatus: nucleotide sequence determination of the 41-kb cluster and comparative sequence analyses.</title>
        <authorList>
            <person name="Tagle D.A."/>
            <person name="Stanhope M.J."/>
            <person name="Siemieniak D.R."/>
            <person name="Benson P.J."/>
            <person name="Goodman M."/>
            <person name="Slightom J.L."/>
        </authorList>
    </citation>
    <scope>NUCLEOTIDE SEQUENCE [GENOMIC DNA]</scope>
    <source>
        <tissue>Liver</tissue>
    </source>
</reference>
<feature type="chain" id="PRO_0000053165" description="Hemoglobin subunit delta">
    <location>
        <begin position="1"/>
        <end position="147"/>
    </location>
</feature>
<feature type="domain" description="Globin" evidence="2">
    <location>
        <begin position="3"/>
        <end position="147"/>
    </location>
</feature>
<feature type="binding site" description="distal binding residue">
    <location>
        <position position="64"/>
    </location>
    <ligand>
        <name>heme b</name>
        <dbReference type="ChEBI" id="CHEBI:60344"/>
    </ligand>
    <ligandPart>
        <name>Fe</name>
        <dbReference type="ChEBI" id="CHEBI:18248"/>
    </ligandPart>
</feature>
<feature type="binding site" description="proximal binding residue">
    <location>
        <position position="93"/>
    </location>
    <ligand>
        <name>heme b</name>
        <dbReference type="ChEBI" id="CHEBI:60344"/>
    </ligand>
    <ligandPart>
        <name>Fe</name>
        <dbReference type="ChEBI" id="CHEBI:18248"/>
    </ligandPart>
</feature>
<feature type="modified residue" description="Phosphoserine" evidence="1">
    <location>
        <position position="51"/>
    </location>
</feature>
<proteinExistence type="evidence at transcript level"/>
<evidence type="ECO:0000250" key="1">
    <source>
        <dbReference type="UniProtKB" id="P02042"/>
    </source>
</evidence>
<evidence type="ECO:0000255" key="2">
    <source>
        <dbReference type="PROSITE-ProRule" id="PRU00238"/>
    </source>
</evidence>
<sequence length="147" mass="16087">MVHLTPDEKNAVCALWGKVNVEEVGGEALGRLLVVYPWTQRFFDSFGDLSSPSAVMGNPKVKAHGKKVLSAFSEGLNHLDNLKGTFAKLSELHCDKLHVDPENFRLLGNVLVVVLAHHFGKDFTPEVQAAYQKVVAGVATALAHKYH</sequence>
<protein>
    <recommendedName>
        <fullName>Hemoglobin subunit delta</fullName>
    </recommendedName>
    <alternativeName>
        <fullName>Delta-globin</fullName>
    </alternativeName>
    <alternativeName>
        <fullName>Hemoglobin delta chain</fullName>
    </alternativeName>
</protein>
<accession>Q03902</accession>
<comment type="subunit">
    <text>Heterotetramer of two delta chains and two alpha chains.</text>
</comment>
<comment type="tissue specificity">
    <text>Red blood cells.</text>
</comment>
<comment type="similarity">
    <text evidence="2">Belongs to the globin family.</text>
</comment>
<gene>
    <name type="primary">HBD</name>
</gene>
<organism>
    <name type="scientific">Otolemur crassicaudatus</name>
    <name type="common">Brown greater galago</name>
    <name type="synonym">Galago crassicaudatus</name>
    <dbReference type="NCBI Taxonomy" id="9463"/>
    <lineage>
        <taxon>Eukaryota</taxon>
        <taxon>Metazoa</taxon>
        <taxon>Chordata</taxon>
        <taxon>Craniata</taxon>
        <taxon>Vertebrata</taxon>
        <taxon>Euteleostomi</taxon>
        <taxon>Mammalia</taxon>
        <taxon>Eutheria</taxon>
        <taxon>Euarchontoglires</taxon>
        <taxon>Primates</taxon>
        <taxon>Strepsirrhini</taxon>
        <taxon>Lorisiformes</taxon>
        <taxon>Galagidae</taxon>
        <taxon>Otolemur</taxon>
    </lineage>
</organism>